<protein>
    <recommendedName>
        <fullName evidence="1">Segregation and condensation protein B</fullName>
    </recommendedName>
</protein>
<accession>P0DF64</accession>
<accession>P60222</accession>
<accession>Q9A1B1</accession>
<dbReference type="EMBL" id="AE014074">
    <property type="protein sequence ID" value="AAM78875.1"/>
    <property type="molecule type" value="Genomic_DNA"/>
</dbReference>
<dbReference type="RefSeq" id="WP_002985894.1">
    <property type="nucleotide sequence ID" value="NC_004070.1"/>
</dbReference>
<dbReference type="SMR" id="P0DF64"/>
<dbReference type="GeneID" id="69901359"/>
<dbReference type="KEGG" id="spg:SpyM3_0268"/>
<dbReference type="HOGENOM" id="CLU_045647_5_3_9"/>
<dbReference type="Proteomes" id="UP000000564">
    <property type="component" value="Chromosome"/>
</dbReference>
<dbReference type="GO" id="GO:0005737">
    <property type="term" value="C:cytoplasm"/>
    <property type="evidence" value="ECO:0007669"/>
    <property type="project" value="UniProtKB-SubCell"/>
</dbReference>
<dbReference type="GO" id="GO:0051301">
    <property type="term" value="P:cell division"/>
    <property type="evidence" value="ECO:0007669"/>
    <property type="project" value="UniProtKB-KW"/>
</dbReference>
<dbReference type="GO" id="GO:0051304">
    <property type="term" value="P:chromosome separation"/>
    <property type="evidence" value="ECO:0007669"/>
    <property type="project" value="InterPro"/>
</dbReference>
<dbReference type="GO" id="GO:0006260">
    <property type="term" value="P:DNA replication"/>
    <property type="evidence" value="ECO:0007669"/>
    <property type="project" value="UniProtKB-UniRule"/>
</dbReference>
<dbReference type="Gene3D" id="1.10.10.10">
    <property type="entry name" value="Winged helix-like DNA-binding domain superfamily/Winged helix DNA-binding domain"/>
    <property type="match status" value="2"/>
</dbReference>
<dbReference type="HAMAP" id="MF_01804">
    <property type="entry name" value="ScpB"/>
    <property type="match status" value="1"/>
</dbReference>
<dbReference type="InterPro" id="IPR005234">
    <property type="entry name" value="ScpB_csome_segregation"/>
</dbReference>
<dbReference type="InterPro" id="IPR036388">
    <property type="entry name" value="WH-like_DNA-bd_sf"/>
</dbReference>
<dbReference type="InterPro" id="IPR036390">
    <property type="entry name" value="WH_DNA-bd_sf"/>
</dbReference>
<dbReference type="NCBIfam" id="TIGR00281">
    <property type="entry name" value="SMC-Scp complex subunit ScpB"/>
    <property type="match status" value="1"/>
</dbReference>
<dbReference type="PANTHER" id="PTHR34298">
    <property type="entry name" value="SEGREGATION AND CONDENSATION PROTEIN B"/>
    <property type="match status" value="1"/>
</dbReference>
<dbReference type="PANTHER" id="PTHR34298:SF2">
    <property type="entry name" value="SEGREGATION AND CONDENSATION PROTEIN B"/>
    <property type="match status" value="1"/>
</dbReference>
<dbReference type="Pfam" id="PF04079">
    <property type="entry name" value="SMC_ScpB"/>
    <property type="match status" value="1"/>
</dbReference>
<dbReference type="PIRSF" id="PIRSF019345">
    <property type="entry name" value="ScpB"/>
    <property type="match status" value="1"/>
</dbReference>
<dbReference type="SUPFAM" id="SSF46785">
    <property type="entry name" value="Winged helix' DNA-binding domain"/>
    <property type="match status" value="2"/>
</dbReference>
<organism>
    <name type="scientific">Streptococcus pyogenes serotype M3 (strain ATCC BAA-595 / MGAS315)</name>
    <dbReference type="NCBI Taxonomy" id="198466"/>
    <lineage>
        <taxon>Bacteria</taxon>
        <taxon>Bacillati</taxon>
        <taxon>Bacillota</taxon>
        <taxon>Bacilli</taxon>
        <taxon>Lactobacillales</taxon>
        <taxon>Streptococcaceae</taxon>
        <taxon>Streptococcus</taxon>
    </lineage>
</organism>
<feature type="chain" id="PRO_0000211162" description="Segregation and condensation protein B">
    <location>
        <begin position="1"/>
        <end position="183"/>
    </location>
</feature>
<keyword id="KW-0131">Cell cycle</keyword>
<keyword id="KW-0132">Cell division</keyword>
<keyword id="KW-0159">Chromosome partition</keyword>
<keyword id="KW-0963">Cytoplasm</keyword>
<name>SCPB_STRP3</name>
<evidence type="ECO:0000255" key="1">
    <source>
        <dbReference type="HAMAP-Rule" id="MF_01804"/>
    </source>
</evidence>
<sequence>MTYLSQIEALLFVAGEEGLSLRHLASMLSLTPTALQQQLEKLSQKYEKDQHSSLCLIETANTYRLVTKEGFAELLRAYAKTPMNQSLSRASLEVLSIVAYKQPITRIEIDDIRGVNSSGALSKLLAFDLIREAGKKDVVGRPHLYATTDYFLDYMGINHLDELIEVSAVEPADEEIALFRTQD</sequence>
<comment type="function">
    <text evidence="1">Participates in chromosomal partition during cell division. May act via the formation of a condensin-like complex containing Smc and ScpA that pull DNA away from mid-cell into both cell halves.</text>
</comment>
<comment type="subunit">
    <text evidence="1">Homodimer. Homodimerization may be required to stabilize the binding of ScpA to the Smc head domains. Component of a cohesin-like complex composed of ScpA, ScpB and the Smc homodimer, in which ScpA and ScpB bind to the head domain of Smc. The presence of the three proteins is required for the association of the complex with DNA.</text>
</comment>
<comment type="subcellular location">
    <subcellularLocation>
        <location evidence="1">Cytoplasm</location>
    </subcellularLocation>
    <text evidence="1">Associated with two foci at the outer edges of the nucleoid region in young cells, and at four foci within both cell halves in older cells.</text>
</comment>
<comment type="similarity">
    <text evidence="1">Belongs to the ScpB family.</text>
</comment>
<gene>
    <name evidence="1" type="primary">scpB</name>
    <name type="ordered locus">SpyM3_0268</name>
</gene>
<reference key="1">
    <citation type="journal article" date="2002" name="Proc. Natl. Acad. Sci. U.S.A.">
        <title>Genome sequence of a serotype M3 strain of group A Streptococcus: phage-encoded toxins, the high-virulence phenotype, and clone emergence.</title>
        <authorList>
            <person name="Beres S.B."/>
            <person name="Sylva G.L."/>
            <person name="Barbian K.D."/>
            <person name="Lei B."/>
            <person name="Hoff J.S."/>
            <person name="Mammarella N.D."/>
            <person name="Liu M.-Y."/>
            <person name="Smoot J.C."/>
            <person name="Porcella S.F."/>
            <person name="Parkins L.D."/>
            <person name="Campbell D.S."/>
            <person name="Smith T.M."/>
            <person name="McCormick J.K."/>
            <person name="Leung D.Y.M."/>
            <person name="Schlievert P.M."/>
            <person name="Musser J.M."/>
        </authorList>
    </citation>
    <scope>NUCLEOTIDE SEQUENCE [LARGE SCALE GENOMIC DNA]</scope>
    <source>
        <strain>ATCC BAA-595 / MGAS315</strain>
    </source>
</reference>
<proteinExistence type="inferred from homology"/>